<reference key="1">
    <citation type="journal article" date="1990" name="J. Bacteriol.">
        <title>Developmental rearrangement of cyanobacterial nif genes: nucleotide sequence, open reading frames, and cytochrome P-450 homology of the Anabaena sp. strain PCC 7120 nifD element.</title>
        <authorList>
            <person name="Lammers P.J."/>
            <person name="McLaughlin S."/>
            <person name="Papin S."/>
            <person name="Trujillo-Provencio C."/>
            <person name="Ryncarz A.J. II"/>
        </authorList>
    </citation>
    <scope>PRELIMINARY NUCLEOTIDE SEQUENCE [GENOMIC DNA]</scope>
</reference>
<reference key="2">
    <citation type="submission" date="1995-10" db="EMBL/GenBank/DDBJ databases">
        <authorList>
            <person name="Lammers P.J."/>
            <person name="Trujillo-Provencio C."/>
            <person name="Sanchez C."/>
            <person name="Carillo M."/>
        </authorList>
    </citation>
    <scope>NUCLEOTIDE SEQUENCE [GENOMIC DNA]</scope>
</reference>
<reference key="3">
    <citation type="journal article" date="2001" name="DNA Res.">
        <title>Complete genomic sequence of the filamentous nitrogen-fixing cyanobacterium Anabaena sp. strain PCC 7120.</title>
        <authorList>
            <person name="Kaneko T."/>
            <person name="Nakamura Y."/>
            <person name="Wolk C.P."/>
            <person name="Kuritz T."/>
            <person name="Sasamoto S."/>
            <person name="Watanabe A."/>
            <person name="Iriguchi M."/>
            <person name="Ishikawa A."/>
            <person name="Kawashima K."/>
            <person name="Kimura T."/>
            <person name="Kishida Y."/>
            <person name="Kohara M."/>
            <person name="Matsumoto M."/>
            <person name="Matsuno A."/>
            <person name="Muraki A."/>
            <person name="Nakazaki N."/>
            <person name="Shimpo S."/>
            <person name="Sugimoto M."/>
            <person name="Takazawa M."/>
            <person name="Yamada M."/>
            <person name="Yasuda M."/>
            <person name="Tabata S."/>
        </authorList>
    </citation>
    <scope>NUCLEOTIDE SEQUENCE [LARGE SCALE GENOMIC DNA]</scope>
    <source>
        <strain>PCC 7120 / SAG 25.82 / UTEX 2576</strain>
    </source>
</reference>
<protein>
    <recommendedName>
        <fullName>Uncharacterized protein alr1448</fullName>
    </recommendedName>
</protein>
<name>Y1448_NOSS1</name>
<feature type="chain" id="PRO_0000208892" description="Uncharacterized protein alr1448">
    <location>
        <begin position="1"/>
        <end position="384"/>
    </location>
</feature>
<feature type="sequence conflict" description="In Ref. 2; AAC82965." evidence="1" ref="2">
    <original>I</original>
    <variation>M</variation>
    <location>
        <position position="59"/>
    </location>
</feature>
<feature type="sequence conflict" description="In Ref. 2; AAC82965." evidence="1" ref="2">
    <original>LKKEAVKHIIIGTHGYNVPFHGALTSFSILADT</original>
    <variation>SKRGVNTLSLALMVTCPFMGINSFRFGRP</variation>
    <location>
        <begin position="71"/>
        <end position="103"/>
    </location>
</feature>
<feature type="sequence conflict" description="In Ref. 2; AAC82965." evidence="1" ref="2">
    <location>
        <position position="126"/>
    </location>
</feature>
<feature type="sequence conflict" description="In Ref. 2; AAC82965." evidence="1" ref="2">
    <original>ML</original>
    <variation>YV</variation>
    <location>
        <begin position="194"/>
        <end position="195"/>
    </location>
</feature>
<dbReference type="EMBL" id="U38537">
    <property type="protein sequence ID" value="AAC82965.1"/>
    <property type="molecule type" value="Genomic_DNA"/>
</dbReference>
<dbReference type="EMBL" id="BA000019">
    <property type="protein sequence ID" value="BAB73405.1"/>
    <property type="molecule type" value="Genomic_DNA"/>
</dbReference>
<dbReference type="PIR" id="A37842">
    <property type="entry name" value="A37842"/>
</dbReference>
<dbReference type="PIR" id="AE1987">
    <property type="entry name" value="AE1987"/>
</dbReference>
<dbReference type="RefSeq" id="WP_010995620.1">
    <property type="nucleotide sequence ID" value="NZ_RSCN01000040.1"/>
</dbReference>
<dbReference type="ESTHER" id="anasp-y1448">
    <property type="family name" value="Duf_900"/>
</dbReference>
<dbReference type="KEGG" id="ana:alr1448"/>
<dbReference type="eggNOG" id="COG4782">
    <property type="taxonomic scope" value="Bacteria"/>
</dbReference>
<dbReference type="OrthoDB" id="581563at2"/>
<dbReference type="Proteomes" id="UP000002483">
    <property type="component" value="Chromosome"/>
</dbReference>
<dbReference type="GO" id="GO:0009399">
    <property type="term" value="P:nitrogen fixation"/>
    <property type="evidence" value="ECO:0007669"/>
    <property type="project" value="UniProtKB-KW"/>
</dbReference>
<dbReference type="Gene3D" id="3.40.50.1820">
    <property type="entry name" value="alpha/beta hydrolase"/>
    <property type="match status" value="1"/>
</dbReference>
<dbReference type="InterPro" id="IPR029058">
    <property type="entry name" value="AB_hydrolase_fold"/>
</dbReference>
<dbReference type="InterPro" id="IPR010297">
    <property type="entry name" value="DUF900_hydrolase"/>
</dbReference>
<dbReference type="PANTHER" id="PTHR36513">
    <property type="entry name" value="ABC TRANSMEMBRANE TYPE-1 DOMAIN-CONTAINING PROTEIN"/>
    <property type="match status" value="1"/>
</dbReference>
<dbReference type="PANTHER" id="PTHR36513:SF1">
    <property type="entry name" value="TRANSMEMBRANE PROTEIN"/>
    <property type="match status" value="1"/>
</dbReference>
<dbReference type="Pfam" id="PF05990">
    <property type="entry name" value="DUF900"/>
    <property type="match status" value="1"/>
</dbReference>
<dbReference type="SUPFAM" id="SSF53474">
    <property type="entry name" value="alpha/beta-Hydrolases"/>
    <property type="match status" value="1"/>
</dbReference>
<evidence type="ECO:0000305" key="1"/>
<sequence>MQIRFFATNRDRQNLGLNVDRDTRIKLLKFGYHWVDMKKYMAHYLATTDPSTMPPGVIIEDSEETVFNKFLKKEAVKHIIIGTHGYNVPFHGALTSFSILADTLKGALKKHNFTLIADPEEKIDIDNSNQNLIAFVGFSWPSNGKVLDYNSDRTECVQSAPALANLISYIRTKKPDIKIYVIAHSMGSYLVCHMLEQLVNQAFEPTELNEEIKNRLKRKDRGGENTFFVDRYFMLAPDVERREVTKCDLGGSEYTGPFYSGLEHLVQESHVFYSRYDNALKASVVEKDAIRESLQKGFELFTGPDLQKRWESSLGLNPLPALAPNNVYSHNATVLTNRQIDHGDYFDAPAIIDQIANIISEANTSRIPELPWRFSESSDRPLIE</sequence>
<proteinExistence type="predicted"/>
<gene>
    <name type="ordered locus">alr1448</name>
</gene>
<accession>P29978</accession>
<accession>Q44140</accession>
<organism>
    <name type="scientific">Nostoc sp. (strain PCC 7120 / SAG 25.82 / UTEX 2576)</name>
    <dbReference type="NCBI Taxonomy" id="103690"/>
    <lineage>
        <taxon>Bacteria</taxon>
        <taxon>Bacillati</taxon>
        <taxon>Cyanobacteriota</taxon>
        <taxon>Cyanophyceae</taxon>
        <taxon>Nostocales</taxon>
        <taxon>Nostocaceae</taxon>
        <taxon>Nostoc</taxon>
    </lineage>
</organism>
<keyword id="KW-0535">Nitrogen fixation</keyword>
<keyword id="KW-1185">Reference proteome</keyword>